<comment type="function">
    <text evidence="1">In the presence of arginine, coactivates the transcription of the arcABDC operon, with other regulatory proteins such as ArcR and CcpA.</text>
</comment>
<comment type="pathway">
    <text>Amino-acid degradation; L-arginine degradation via ADI pathway.</text>
</comment>
<comment type="subcellular location">
    <subcellularLocation>
        <location evidence="1">Cytoplasm</location>
    </subcellularLocation>
</comment>
<comment type="similarity">
    <text evidence="2">Belongs to the ArgR family.</text>
</comment>
<organism>
    <name type="scientific">Streptococcus suis</name>
    <dbReference type="NCBI Taxonomy" id="1307"/>
    <lineage>
        <taxon>Bacteria</taxon>
        <taxon>Bacillati</taxon>
        <taxon>Bacillota</taxon>
        <taxon>Bacilli</taxon>
        <taxon>Lactobacillales</taxon>
        <taxon>Streptococcaceae</taxon>
        <taxon>Streptococcus</taxon>
    </lineage>
</organism>
<name>ARGR_STRSU</name>
<dbReference type="EMBL" id="AF546864">
    <property type="protein sequence ID" value="ABB17163.1"/>
    <property type="molecule type" value="Genomic_DNA"/>
</dbReference>
<dbReference type="RefSeq" id="WP_002941715.1">
    <property type="nucleotide sequence ID" value="NZ_WODB01000009.1"/>
</dbReference>
<dbReference type="SMR" id="Q3C167"/>
<dbReference type="STRING" id="1321372.GCA_000478745_01282"/>
<dbReference type="eggNOG" id="COG1438">
    <property type="taxonomic scope" value="Bacteria"/>
</dbReference>
<dbReference type="OMA" id="RYSMPNE"/>
<dbReference type="UniPathway" id="UPA00254"/>
<dbReference type="GO" id="GO:0005737">
    <property type="term" value="C:cytoplasm"/>
    <property type="evidence" value="ECO:0007669"/>
    <property type="project" value="UniProtKB-SubCell"/>
</dbReference>
<dbReference type="GO" id="GO:0034618">
    <property type="term" value="F:arginine binding"/>
    <property type="evidence" value="ECO:0007669"/>
    <property type="project" value="InterPro"/>
</dbReference>
<dbReference type="GO" id="GO:0003677">
    <property type="term" value="F:DNA binding"/>
    <property type="evidence" value="ECO:0007669"/>
    <property type="project" value="UniProtKB-KW"/>
</dbReference>
<dbReference type="GO" id="GO:0003700">
    <property type="term" value="F:DNA-binding transcription factor activity"/>
    <property type="evidence" value="ECO:0007669"/>
    <property type="project" value="UniProtKB-UniRule"/>
</dbReference>
<dbReference type="GO" id="GO:0019547">
    <property type="term" value="P:arginine catabolic process to ornithine"/>
    <property type="evidence" value="ECO:0007669"/>
    <property type="project" value="UniProtKB-UniPathway"/>
</dbReference>
<dbReference type="GO" id="GO:0051259">
    <property type="term" value="P:protein complex oligomerization"/>
    <property type="evidence" value="ECO:0007669"/>
    <property type="project" value="InterPro"/>
</dbReference>
<dbReference type="GO" id="GO:1900079">
    <property type="term" value="P:regulation of arginine biosynthetic process"/>
    <property type="evidence" value="ECO:0007669"/>
    <property type="project" value="UniProtKB-UniRule"/>
</dbReference>
<dbReference type="Gene3D" id="3.30.1360.40">
    <property type="match status" value="1"/>
</dbReference>
<dbReference type="Gene3D" id="1.10.10.10">
    <property type="entry name" value="Winged helix-like DNA-binding domain superfamily/Winged helix DNA-binding domain"/>
    <property type="match status" value="1"/>
</dbReference>
<dbReference type="HAMAP" id="MF_00173">
    <property type="entry name" value="Arg_repressor"/>
    <property type="match status" value="1"/>
</dbReference>
<dbReference type="InterPro" id="IPR001669">
    <property type="entry name" value="Arg_repress"/>
</dbReference>
<dbReference type="InterPro" id="IPR020899">
    <property type="entry name" value="Arg_repress_C"/>
</dbReference>
<dbReference type="InterPro" id="IPR036251">
    <property type="entry name" value="Arg_repress_C_sf"/>
</dbReference>
<dbReference type="InterPro" id="IPR020900">
    <property type="entry name" value="Arg_repress_DNA-bd"/>
</dbReference>
<dbReference type="InterPro" id="IPR036388">
    <property type="entry name" value="WH-like_DNA-bd_sf"/>
</dbReference>
<dbReference type="InterPro" id="IPR036390">
    <property type="entry name" value="WH_DNA-bd_sf"/>
</dbReference>
<dbReference type="PANTHER" id="PTHR34471">
    <property type="entry name" value="ARGININE REPRESSOR"/>
    <property type="match status" value="1"/>
</dbReference>
<dbReference type="PANTHER" id="PTHR34471:SF1">
    <property type="entry name" value="ARGININE REPRESSOR"/>
    <property type="match status" value="1"/>
</dbReference>
<dbReference type="Pfam" id="PF01316">
    <property type="entry name" value="Arg_repressor"/>
    <property type="match status" value="1"/>
</dbReference>
<dbReference type="Pfam" id="PF02863">
    <property type="entry name" value="Arg_repressor_C"/>
    <property type="match status" value="1"/>
</dbReference>
<dbReference type="PRINTS" id="PR01467">
    <property type="entry name" value="ARGREPRESSOR"/>
</dbReference>
<dbReference type="SUPFAM" id="SSF55252">
    <property type="entry name" value="C-terminal domain of arginine repressor"/>
    <property type="match status" value="1"/>
</dbReference>
<dbReference type="SUPFAM" id="SSF46785">
    <property type="entry name" value="Winged helix' DNA-binding domain"/>
    <property type="match status" value="1"/>
</dbReference>
<gene>
    <name type="primary">argR</name>
</gene>
<reference key="1">
    <citation type="journal article" date="2002" name="J. Bacteriol.">
        <title>Identification and characterization of two temperature-induced surface-associated proteins of Streptococcus suis with high homologies to members of the arginine deiminase system of Streptococcus pyogenes.</title>
        <authorList>
            <person name="Winterhoff N."/>
            <person name="Goethe R."/>
            <person name="Gruening P."/>
            <person name="Valentin-Weigand P."/>
        </authorList>
    </citation>
    <scope>NUCLEOTIDE SEQUENCE [GENOMIC DNA]</scope>
    <source>
        <strain>I9841/1</strain>
    </source>
</reference>
<sequence>MNKIESRHQLILSLIMEKKIHTQQELQELLEVNGVSVTQSTLSRDIKMLNLVKVNEDDSSHYVINPIAPTRWEKRLRLYMEDALVMLKPIQHQVVLKTLPGLANSFGSILDAMEIPQIVATVCGDDVCLIICEDVEGAQACFEHLKQFTPPFFFSKL</sequence>
<protein>
    <recommendedName>
        <fullName>Arginine regulator</fullName>
    </recommendedName>
</protein>
<evidence type="ECO:0000250" key="1"/>
<evidence type="ECO:0000305" key="2"/>
<proteinExistence type="inferred from homology"/>
<keyword id="KW-0010">Activator</keyword>
<keyword id="KW-0056">Arginine metabolism</keyword>
<keyword id="KW-0963">Cytoplasm</keyword>
<keyword id="KW-0238">DNA-binding</keyword>
<keyword id="KW-0804">Transcription</keyword>
<keyword id="KW-0805">Transcription regulation</keyword>
<feature type="chain" id="PRO_0000254659" description="Arginine regulator">
    <location>
        <begin position="1"/>
        <end position="157"/>
    </location>
</feature>
<accession>Q3C167</accession>